<proteinExistence type="inferred from homology"/>
<organism>
    <name type="scientific">Bifidobacterium adolescentis (strain ATCC 15703 / DSM 20083 / NCTC 11814 / E194a)</name>
    <dbReference type="NCBI Taxonomy" id="367928"/>
    <lineage>
        <taxon>Bacteria</taxon>
        <taxon>Bacillati</taxon>
        <taxon>Actinomycetota</taxon>
        <taxon>Actinomycetes</taxon>
        <taxon>Bifidobacteriales</taxon>
        <taxon>Bifidobacteriaceae</taxon>
        <taxon>Bifidobacterium</taxon>
    </lineage>
</organism>
<protein>
    <recommendedName>
        <fullName evidence="1">Na(+)/H(+) antiporter NhaA</fullName>
    </recommendedName>
    <alternativeName>
        <fullName evidence="1">Sodium/proton antiporter NhaA</fullName>
    </alternativeName>
</protein>
<dbReference type="EMBL" id="AP009256">
    <property type="protein sequence ID" value="BAF39371.1"/>
    <property type="molecule type" value="Genomic_DNA"/>
</dbReference>
<dbReference type="SMR" id="A1A0Y8"/>
<dbReference type="PaxDb" id="1680-BADO_0603"/>
<dbReference type="KEGG" id="bad:BAD_0590"/>
<dbReference type="HOGENOM" id="CLU_015803_0_0_11"/>
<dbReference type="Proteomes" id="UP000008702">
    <property type="component" value="Chromosome"/>
</dbReference>
<dbReference type="GO" id="GO:0005886">
    <property type="term" value="C:plasma membrane"/>
    <property type="evidence" value="ECO:0007669"/>
    <property type="project" value="UniProtKB-SubCell"/>
</dbReference>
<dbReference type="GO" id="GO:0015385">
    <property type="term" value="F:sodium:proton antiporter activity"/>
    <property type="evidence" value="ECO:0007669"/>
    <property type="project" value="TreeGrafter"/>
</dbReference>
<dbReference type="GO" id="GO:0006885">
    <property type="term" value="P:regulation of pH"/>
    <property type="evidence" value="ECO:0007669"/>
    <property type="project" value="InterPro"/>
</dbReference>
<dbReference type="Gene3D" id="1.20.1530.10">
    <property type="entry name" value="Na+/H+ antiporter like domain"/>
    <property type="match status" value="1"/>
</dbReference>
<dbReference type="HAMAP" id="MF_01844">
    <property type="entry name" value="NhaA"/>
    <property type="match status" value="1"/>
</dbReference>
<dbReference type="InterPro" id="IPR023171">
    <property type="entry name" value="Na/H_antiporter_dom_sf"/>
</dbReference>
<dbReference type="InterPro" id="IPR004670">
    <property type="entry name" value="NhaA"/>
</dbReference>
<dbReference type="NCBIfam" id="TIGR00773">
    <property type="entry name" value="NhaA"/>
    <property type="match status" value="1"/>
</dbReference>
<dbReference type="PANTHER" id="PTHR30341:SF0">
    <property type="entry name" value="NA(+)_H(+) ANTIPORTER NHAA"/>
    <property type="match status" value="1"/>
</dbReference>
<dbReference type="PANTHER" id="PTHR30341">
    <property type="entry name" value="SODIUM ION/PROTON ANTIPORTER NHAA-RELATED"/>
    <property type="match status" value="1"/>
</dbReference>
<dbReference type="Pfam" id="PF06965">
    <property type="entry name" value="Na_H_antiport_1"/>
    <property type="match status" value="1"/>
</dbReference>
<sequence>MMATSKRGTWATIRRIAASDRISGLIMLGFALAGLLLANLPFTAHAFEQLENFHIAIPHTNIDMGLGHWVQDGLLTVFFLTVGLELKQELTTGSLSNPKAAAVPMLCAVGGMLAPPVLFIGVISLFAAAGSGQLVIASGTSFSFAQMSNGWAVPTATDIAFSLAVLALFAKALPGSIRAFLMTLATVDDLLAIILIAVFFSSVNAWYWFLGIAVCAVVWYFLVRMRKVPWLAVAIVGVLAWVMMFEAGVHPTLAGVLVGLLTPAHERFGEKTPRAERYADKLQPFSALLALPIFALFATGVHFESLTLALFVSPVVVAVMVALVVGKPLGIMTTAWLSTHVGGLKMAKGLRVRDMFPAACACGIGFTVSFLIASLAYQDAELSAEARFGVLVGSMVAAVISGILLSRQSKRFELEDGTKHKHHTGDEDAMNEVETVLEDGTVVVSQIIGTHQEQ</sequence>
<evidence type="ECO:0000255" key="1">
    <source>
        <dbReference type="HAMAP-Rule" id="MF_01844"/>
    </source>
</evidence>
<comment type="function">
    <text evidence="1">Na(+)/H(+) antiporter that extrudes sodium in exchange for external protons.</text>
</comment>
<comment type="catalytic activity">
    <reaction evidence="1">
        <text>Na(+)(in) + 2 H(+)(out) = Na(+)(out) + 2 H(+)(in)</text>
        <dbReference type="Rhea" id="RHEA:29251"/>
        <dbReference type="ChEBI" id="CHEBI:15378"/>
        <dbReference type="ChEBI" id="CHEBI:29101"/>
    </reaction>
    <physiologicalReaction direction="left-to-right" evidence="1">
        <dbReference type="Rhea" id="RHEA:29252"/>
    </physiologicalReaction>
</comment>
<comment type="subcellular location">
    <subcellularLocation>
        <location evidence="1">Cell membrane</location>
        <topology evidence="1">Multi-pass membrane protein</topology>
    </subcellularLocation>
</comment>
<comment type="similarity">
    <text evidence="1">Belongs to the NhaA Na(+)/H(+) (TC 2.A.33) antiporter family.</text>
</comment>
<name>NHAA_BIFAA</name>
<keyword id="KW-0050">Antiport</keyword>
<keyword id="KW-1003">Cell membrane</keyword>
<keyword id="KW-0406">Ion transport</keyword>
<keyword id="KW-0472">Membrane</keyword>
<keyword id="KW-1185">Reference proteome</keyword>
<keyword id="KW-0915">Sodium</keyword>
<keyword id="KW-0739">Sodium transport</keyword>
<keyword id="KW-0812">Transmembrane</keyword>
<keyword id="KW-1133">Transmembrane helix</keyword>
<keyword id="KW-0813">Transport</keyword>
<gene>
    <name evidence="1" type="primary">nhaA</name>
    <name type="ordered locus">BAD_0590</name>
</gene>
<reference key="1">
    <citation type="submission" date="2006-12" db="EMBL/GenBank/DDBJ databases">
        <title>Bifidobacterium adolescentis complete genome sequence.</title>
        <authorList>
            <person name="Suzuki T."/>
            <person name="Tsuda Y."/>
            <person name="Kanou N."/>
            <person name="Inoue T."/>
            <person name="Kumazaki K."/>
            <person name="Nagano S."/>
            <person name="Hirai S."/>
            <person name="Tanaka K."/>
            <person name="Watanabe K."/>
        </authorList>
    </citation>
    <scope>NUCLEOTIDE SEQUENCE [LARGE SCALE GENOMIC DNA]</scope>
    <source>
        <strain>ATCC 15703 / DSM 20083 / NCTC 11814 / E194a</strain>
    </source>
</reference>
<feature type="chain" id="PRO_0000334239" description="Na(+)/H(+) antiporter NhaA">
    <location>
        <begin position="1"/>
        <end position="454"/>
    </location>
</feature>
<feature type="transmembrane region" description="Helical" evidence="1">
    <location>
        <begin position="22"/>
        <end position="42"/>
    </location>
</feature>
<feature type="transmembrane region" description="Helical" evidence="1">
    <location>
        <begin position="64"/>
        <end position="84"/>
    </location>
</feature>
<feature type="transmembrane region" description="Helical" evidence="1">
    <location>
        <begin position="106"/>
        <end position="126"/>
    </location>
</feature>
<feature type="transmembrane region" description="Helical" evidence="1">
    <location>
        <begin position="150"/>
        <end position="170"/>
    </location>
</feature>
<feature type="transmembrane region" description="Helical" evidence="1">
    <location>
        <begin position="190"/>
        <end position="210"/>
    </location>
</feature>
<feature type="transmembrane region" description="Helical" evidence="1">
    <location>
        <begin position="228"/>
        <end position="248"/>
    </location>
</feature>
<feature type="transmembrane region" description="Helical" evidence="1">
    <location>
        <begin position="284"/>
        <end position="304"/>
    </location>
</feature>
<feature type="transmembrane region" description="Helical" evidence="1">
    <location>
        <begin position="306"/>
        <end position="326"/>
    </location>
</feature>
<feature type="transmembrane region" description="Helical" evidence="1">
    <location>
        <begin position="355"/>
        <end position="375"/>
    </location>
</feature>
<feature type="transmembrane region" description="Helical" evidence="1">
    <location>
        <begin position="386"/>
        <end position="406"/>
    </location>
</feature>
<accession>A1A0Y8</accession>